<name>GLMU_SALSV</name>
<sequence length="456" mass="49146">MLNSAMSVVILAAGKGTRMYSDIPKVLHTLAGKPMVQHVIDAATKLGAAQVHLVYGHGGELLKQTLKDDKLNWVLQAEQLGTGHAMQQAAPFFSDDEDILMLYGDVPLISVETLQRLRDAKPQGGIGLLTVKLDDPSGYGRITRENGKVTGIVEHKDATDEQRQIQEINTGILIANGADLKRWLSKLTNNNAQGEYYITDIIALAYHEGREIAAVHPARISETDGVNNRLQLSRLERIYQAEQAEKLLLSGVMLRDPARFDLRGNLAHGRDVEIDANVIIEGNVTLGHRVKIGAGCIIKNSVIGDDCEISPYSVVEDAHLEAACTIGPFARLRPGAELLAGAHVGNFVEMKKARLGKGSKAGHLTYLGDAEIGDNVNIGAGTITCNYDGANKFKTVIGDDVFVGSDTQLVAPVTVGKGATIAAGTTVTRNVADNELVLSRVPQVHKQGWQRPVKKK</sequence>
<comment type="function">
    <text evidence="1">Catalyzes the last two sequential reactions in the de novo biosynthetic pathway for UDP-N-acetylglucosamine (UDP-GlcNAc). The C-terminal domain catalyzes the transfer of acetyl group from acetyl coenzyme A to glucosamine-1-phosphate (GlcN-1-P) to produce N-acetylglucosamine-1-phosphate (GlcNAc-1-P), which is converted into UDP-GlcNAc by the transfer of uridine 5-monophosphate (from uridine 5-triphosphate), a reaction catalyzed by the N-terminal domain.</text>
</comment>
<comment type="catalytic activity">
    <reaction evidence="1">
        <text>alpha-D-glucosamine 1-phosphate + acetyl-CoA = N-acetyl-alpha-D-glucosamine 1-phosphate + CoA + H(+)</text>
        <dbReference type="Rhea" id="RHEA:13725"/>
        <dbReference type="ChEBI" id="CHEBI:15378"/>
        <dbReference type="ChEBI" id="CHEBI:57287"/>
        <dbReference type="ChEBI" id="CHEBI:57288"/>
        <dbReference type="ChEBI" id="CHEBI:57776"/>
        <dbReference type="ChEBI" id="CHEBI:58516"/>
        <dbReference type="EC" id="2.3.1.157"/>
    </reaction>
</comment>
<comment type="catalytic activity">
    <reaction evidence="1">
        <text>N-acetyl-alpha-D-glucosamine 1-phosphate + UTP + H(+) = UDP-N-acetyl-alpha-D-glucosamine + diphosphate</text>
        <dbReference type="Rhea" id="RHEA:13509"/>
        <dbReference type="ChEBI" id="CHEBI:15378"/>
        <dbReference type="ChEBI" id="CHEBI:33019"/>
        <dbReference type="ChEBI" id="CHEBI:46398"/>
        <dbReference type="ChEBI" id="CHEBI:57705"/>
        <dbReference type="ChEBI" id="CHEBI:57776"/>
        <dbReference type="EC" id="2.7.7.23"/>
    </reaction>
</comment>
<comment type="cofactor">
    <cofactor evidence="1">
        <name>Mg(2+)</name>
        <dbReference type="ChEBI" id="CHEBI:18420"/>
    </cofactor>
    <text evidence="1">Binds 1 Mg(2+) ion per subunit.</text>
</comment>
<comment type="pathway">
    <text evidence="1">Nucleotide-sugar biosynthesis; UDP-N-acetyl-alpha-D-glucosamine biosynthesis; N-acetyl-alpha-D-glucosamine 1-phosphate from alpha-D-glucosamine 6-phosphate (route II): step 2/2.</text>
</comment>
<comment type="pathway">
    <text evidence="1">Nucleotide-sugar biosynthesis; UDP-N-acetyl-alpha-D-glucosamine biosynthesis; UDP-N-acetyl-alpha-D-glucosamine from N-acetyl-alpha-D-glucosamine 1-phosphate: step 1/1.</text>
</comment>
<comment type="pathway">
    <text evidence="1">Bacterial outer membrane biogenesis; LPS lipid A biosynthesis.</text>
</comment>
<comment type="subunit">
    <text evidence="1">Homotrimer.</text>
</comment>
<comment type="subcellular location">
    <subcellularLocation>
        <location evidence="1">Cytoplasm</location>
    </subcellularLocation>
</comment>
<comment type="similarity">
    <text evidence="1">In the N-terminal section; belongs to the N-acetylglucosamine-1-phosphate uridyltransferase family.</text>
</comment>
<comment type="similarity">
    <text evidence="1">In the C-terminal section; belongs to the transferase hexapeptide repeat family.</text>
</comment>
<evidence type="ECO:0000255" key="1">
    <source>
        <dbReference type="HAMAP-Rule" id="MF_01631"/>
    </source>
</evidence>
<feature type="chain" id="PRO_1000186487" description="Bifunctional protein GlmU">
    <location>
        <begin position="1"/>
        <end position="456"/>
    </location>
</feature>
<feature type="region of interest" description="Pyrophosphorylase" evidence="1">
    <location>
        <begin position="1"/>
        <end position="229"/>
    </location>
</feature>
<feature type="region of interest" description="Linker" evidence="1">
    <location>
        <begin position="230"/>
        <end position="250"/>
    </location>
</feature>
<feature type="region of interest" description="N-acetyltransferase" evidence="1">
    <location>
        <begin position="251"/>
        <end position="456"/>
    </location>
</feature>
<feature type="active site" description="Proton acceptor" evidence="1">
    <location>
        <position position="363"/>
    </location>
</feature>
<feature type="binding site" evidence="1">
    <location>
        <begin position="11"/>
        <end position="14"/>
    </location>
    <ligand>
        <name>UDP-N-acetyl-alpha-D-glucosamine</name>
        <dbReference type="ChEBI" id="CHEBI:57705"/>
    </ligand>
</feature>
<feature type="binding site" evidence="1">
    <location>
        <position position="25"/>
    </location>
    <ligand>
        <name>UDP-N-acetyl-alpha-D-glucosamine</name>
        <dbReference type="ChEBI" id="CHEBI:57705"/>
    </ligand>
</feature>
<feature type="binding site" evidence="1">
    <location>
        <position position="76"/>
    </location>
    <ligand>
        <name>UDP-N-acetyl-alpha-D-glucosamine</name>
        <dbReference type="ChEBI" id="CHEBI:57705"/>
    </ligand>
</feature>
<feature type="binding site" evidence="1">
    <location>
        <begin position="81"/>
        <end position="82"/>
    </location>
    <ligand>
        <name>UDP-N-acetyl-alpha-D-glucosamine</name>
        <dbReference type="ChEBI" id="CHEBI:57705"/>
    </ligand>
</feature>
<feature type="binding site" evidence="1">
    <location>
        <begin position="103"/>
        <end position="105"/>
    </location>
    <ligand>
        <name>UDP-N-acetyl-alpha-D-glucosamine</name>
        <dbReference type="ChEBI" id="CHEBI:57705"/>
    </ligand>
</feature>
<feature type="binding site" evidence="1">
    <location>
        <position position="105"/>
    </location>
    <ligand>
        <name>Mg(2+)</name>
        <dbReference type="ChEBI" id="CHEBI:18420"/>
    </ligand>
</feature>
<feature type="binding site" evidence="1">
    <location>
        <position position="140"/>
    </location>
    <ligand>
        <name>UDP-N-acetyl-alpha-D-glucosamine</name>
        <dbReference type="ChEBI" id="CHEBI:57705"/>
    </ligand>
</feature>
<feature type="binding site" evidence="1">
    <location>
        <position position="154"/>
    </location>
    <ligand>
        <name>UDP-N-acetyl-alpha-D-glucosamine</name>
        <dbReference type="ChEBI" id="CHEBI:57705"/>
    </ligand>
</feature>
<feature type="binding site" evidence="1">
    <location>
        <position position="169"/>
    </location>
    <ligand>
        <name>UDP-N-acetyl-alpha-D-glucosamine</name>
        <dbReference type="ChEBI" id="CHEBI:57705"/>
    </ligand>
</feature>
<feature type="binding site" evidence="1">
    <location>
        <position position="227"/>
    </location>
    <ligand>
        <name>Mg(2+)</name>
        <dbReference type="ChEBI" id="CHEBI:18420"/>
    </ligand>
</feature>
<feature type="binding site" evidence="1">
    <location>
        <position position="227"/>
    </location>
    <ligand>
        <name>UDP-N-acetyl-alpha-D-glucosamine</name>
        <dbReference type="ChEBI" id="CHEBI:57705"/>
    </ligand>
</feature>
<feature type="binding site" evidence="1">
    <location>
        <position position="333"/>
    </location>
    <ligand>
        <name>UDP-N-acetyl-alpha-D-glucosamine</name>
        <dbReference type="ChEBI" id="CHEBI:57705"/>
    </ligand>
</feature>
<feature type="binding site" evidence="1">
    <location>
        <position position="351"/>
    </location>
    <ligand>
        <name>UDP-N-acetyl-alpha-D-glucosamine</name>
        <dbReference type="ChEBI" id="CHEBI:57705"/>
    </ligand>
</feature>
<feature type="binding site" evidence="1">
    <location>
        <position position="366"/>
    </location>
    <ligand>
        <name>UDP-N-acetyl-alpha-D-glucosamine</name>
        <dbReference type="ChEBI" id="CHEBI:57705"/>
    </ligand>
</feature>
<feature type="binding site" evidence="1">
    <location>
        <position position="377"/>
    </location>
    <ligand>
        <name>UDP-N-acetyl-alpha-D-glucosamine</name>
        <dbReference type="ChEBI" id="CHEBI:57705"/>
    </ligand>
</feature>
<feature type="binding site" evidence="1">
    <location>
        <position position="380"/>
    </location>
    <ligand>
        <name>acetyl-CoA</name>
        <dbReference type="ChEBI" id="CHEBI:57288"/>
    </ligand>
</feature>
<feature type="binding site" evidence="1">
    <location>
        <begin position="386"/>
        <end position="387"/>
    </location>
    <ligand>
        <name>acetyl-CoA</name>
        <dbReference type="ChEBI" id="CHEBI:57288"/>
    </ligand>
</feature>
<feature type="binding site" evidence="1">
    <location>
        <position position="405"/>
    </location>
    <ligand>
        <name>acetyl-CoA</name>
        <dbReference type="ChEBI" id="CHEBI:57288"/>
    </ligand>
</feature>
<feature type="binding site" evidence="1">
    <location>
        <position position="423"/>
    </location>
    <ligand>
        <name>acetyl-CoA</name>
        <dbReference type="ChEBI" id="CHEBI:57288"/>
    </ligand>
</feature>
<feature type="binding site" evidence="1">
    <location>
        <position position="440"/>
    </location>
    <ligand>
        <name>acetyl-CoA</name>
        <dbReference type="ChEBI" id="CHEBI:57288"/>
    </ligand>
</feature>
<keyword id="KW-0012">Acyltransferase</keyword>
<keyword id="KW-0133">Cell shape</keyword>
<keyword id="KW-0961">Cell wall biogenesis/degradation</keyword>
<keyword id="KW-0963">Cytoplasm</keyword>
<keyword id="KW-0460">Magnesium</keyword>
<keyword id="KW-0479">Metal-binding</keyword>
<keyword id="KW-0511">Multifunctional enzyme</keyword>
<keyword id="KW-0548">Nucleotidyltransferase</keyword>
<keyword id="KW-0573">Peptidoglycan synthesis</keyword>
<keyword id="KW-0677">Repeat</keyword>
<keyword id="KW-0808">Transferase</keyword>
<dbReference type="EC" id="2.7.7.23" evidence="1"/>
<dbReference type="EC" id="2.3.1.157" evidence="1"/>
<dbReference type="EMBL" id="CP001127">
    <property type="protein sequence ID" value="ACF88770.1"/>
    <property type="molecule type" value="Genomic_DNA"/>
</dbReference>
<dbReference type="RefSeq" id="WP_000934845.1">
    <property type="nucleotide sequence ID" value="NC_011094.1"/>
</dbReference>
<dbReference type="SMR" id="B4TN27"/>
<dbReference type="KEGG" id="sew:SeSA_A4071"/>
<dbReference type="HOGENOM" id="CLU_029499_15_2_6"/>
<dbReference type="UniPathway" id="UPA00113">
    <property type="reaction ID" value="UER00532"/>
</dbReference>
<dbReference type="UniPathway" id="UPA00113">
    <property type="reaction ID" value="UER00533"/>
</dbReference>
<dbReference type="UniPathway" id="UPA00973"/>
<dbReference type="Proteomes" id="UP000001865">
    <property type="component" value="Chromosome"/>
</dbReference>
<dbReference type="GO" id="GO:0005737">
    <property type="term" value="C:cytoplasm"/>
    <property type="evidence" value="ECO:0007669"/>
    <property type="project" value="UniProtKB-SubCell"/>
</dbReference>
<dbReference type="GO" id="GO:0016020">
    <property type="term" value="C:membrane"/>
    <property type="evidence" value="ECO:0007669"/>
    <property type="project" value="GOC"/>
</dbReference>
<dbReference type="GO" id="GO:0019134">
    <property type="term" value="F:glucosamine-1-phosphate N-acetyltransferase activity"/>
    <property type="evidence" value="ECO:0007669"/>
    <property type="project" value="UniProtKB-UniRule"/>
</dbReference>
<dbReference type="GO" id="GO:0000287">
    <property type="term" value="F:magnesium ion binding"/>
    <property type="evidence" value="ECO:0007669"/>
    <property type="project" value="UniProtKB-UniRule"/>
</dbReference>
<dbReference type="GO" id="GO:0003977">
    <property type="term" value="F:UDP-N-acetylglucosamine diphosphorylase activity"/>
    <property type="evidence" value="ECO:0007669"/>
    <property type="project" value="UniProtKB-UniRule"/>
</dbReference>
<dbReference type="GO" id="GO:0000902">
    <property type="term" value="P:cell morphogenesis"/>
    <property type="evidence" value="ECO:0007669"/>
    <property type="project" value="UniProtKB-UniRule"/>
</dbReference>
<dbReference type="GO" id="GO:0071555">
    <property type="term" value="P:cell wall organization"/>
    <property type="evidence" value="ECO:0007669"/>
    <property type="project" value="UniProtKB-KW"/>
</dbReference>
<dbReference type="GO" id="GO:0009245">
    <property type="term" value="P:lipid A biosynthetic process"/>
    <property type="evidence" value="ECO:0007669"/>
    <property type="project" value="UniProtKB-UniRule"/>
</dbReference>
<dbReference type="GO" id="GO:0009252">
    <property type="term" value="P:peptidoglycan biosynthetic process"/>
    <property type="evidence" value="ECO:0007669"/>
    <property type="project" value="UniProtKB-UniRule"/>
</dbReference>
<dbReference type="GO" id="GO:0008360">
    <property type="term" value="P:regulation of cell shape"/>
    <property type="evidence" value="ECO:0007669"/>
    <property type="project" value="UniProtKB-KW"/>
</dbReference>
<dbReference type="GO" id="GO:0006048">
    <property type="term" value="P:UDP-N-acetylglucosamine biosynthetic process"/>
    <property type="evidence" value="ECO:0007669"/>
    <property type="project" value="UniProtKB-UniPathway"/>
</dbReference>
<dbReference type="CDD" id="cd02540">
    <property type="entry name" value="GT2_GlmU_N_bac"/>
    <property type="match status" value="1"/>
</dbReference>
<dbReference type="CDD" id="cd03353">
    <property type="entry name" value="LbH_GlmU_C"/>
    <property type="match status" value="1"/>
</dbReference>
<dbReference type="FunFam" id="2.160.10.10:FF:000011">
    <property type="entry name" value="Bifunctional protein GlmU"/>
    <property type="match status" value="1"/>
</dbReference>
<dbReference type="FunFam" id="3.90.550.10:FF:000006">
    <property type="entry name" value="Bifunctional protein GlmU"/>
    <property type="match status" value="1"/>
</dbReference>
<dbReference type="Gene3D" id="2.160.10.10">
    <property type="entry name" value="Hexapeptide repeat proteins"/>
    <property type="match status" value="1"/>
</dbReference>
<dbReference type="Gene3D" id="3.90.550.10">
    <property type="entry name" value="Spore Coat Polysaccharide Biosynthesis Protein SpsA, Chain A"/>
    <property type="match status" value="1"/>
</dbReference>
<dbReference type="HAMAP" id="MF_01631">
    <property type="entry name" value="GlmU"/>
    <property type="match status" value="1"/>
</dbReference>
<dbReference type="InterPro" id="IPR005882">
    <property type="entry name" value="Bifunctional_GlmU"/>
</dbReference>
<dbReference type="InterPro" id="IPR050065">
    <property type="entry name" value="GlmU-like"/>
</dbReference>
<dbReference type="InterPro" id="IPR038009">
    <property type="entry name" value="GlmU_C_LbH"/>
</dbReference>
<dbReference type="InterPro" id="IPR001451">
    <property type="entry name" value="Hexapep"/>
</dbReference>
<dbReference type="InterPro" id="IPR018357">
    <property type="entry name" value="Hexapep_transf_CS"/>
</dbReference>
<dbReference type="InterPro" id="IPR025877">
    <property type="entry name" value="MobA-like_NTP_Trfase"/>
</dbReference>
<dbReference type="InterPro" id="IPR029044">
    <property type="entry name" value="Nucleotide-diphossugar_trans"/>
</dbReference>
<dbReference type="InterPro" id="IPR011004">
    <property type="entry name" value="Trimer_LpxA-like_sf"/>
</dbReference>
<dbReference type="NCBIfam" id="TIGR01173">
    <property type="entry name" value="glmU"/>
    <property type="match status" value="1"/>
</dbReference>
<dbReference type="NCBIfam" id="NF006986">
    <property type="entry name" value="PRK09451.1"/>
    <property type="match status" value="1"/>
</dbReference>
<dbReference type="PANTHER" id="PTHR43584:SF3">
    <property type="entry name" value="BIFUNCTIONAL PROTEIN GLMU"/>
    <property type="match status" value="1"/>
</dbReference>
<dbReference type="PANTHER" id="PTHR43584">
    <property type="entry name" value="NUCLEOTIDYL TRANSFERASE"/>
    <property type="match status" value="1"/>
</dbReference>
<dbReference type="Pfam" id="PF00132">
    <property type="entry name" value="Hexapep"/>
    <property type="match status" value="2"/>
</dbReference>
<dbReference type="Pfam" id="PF12804">
    <property type="entry name" value="NTP_transf_3"/>
    <property type="match status" value="1"/>
</dbReference>
<dbReference type="SUPFAM" id="SSF53448">
    <property type="entry name" value="Nucleotide-diphospho-sugar transferases"/>
    <property type="match status" value="1"/>
</dbReference>
<dbReference type="SUPFAM" id="SSF51161">
    <property type="entry name" value="Trimeric LpxA-like enzymes"/>
    <property type="match status" value="1"/>
</dbReference>
<dbReference type="PROSITE" id="PS00101">
    <property type="entry name" value="HEXAPEP_TRANSFERASES"/>
    <property type="match status" value="1"/>
</dbReference>
<protein>
    <recommendedName>
        <fullName evidence="1">Bifunctional protein GlmU</fullName>
    </recommendedName>
    <domain>
        <recommendedName>
            <fullName evidence="1">UDP-N-acetylglucosamine pyrophosphorylase</fullName>
            <ecNumber evidence="1">2.7.7.23</ecNumber>
        </recommendedName>
        <alternativeName>
            <fullName evidence="1">N-acetylglucosamine-1-phosphate uridyltransferase</fullName>
        </alternativeName>
    </domain>
    <domain>
        <recommendedName>
            <fullName evidence="1">Glucosamine-1-phosphate N-acetyltransferase</fullName>
            <ecNumber evidence="1">2.3.1.157</ecNumber>
        </recommendedName>
    </domain>
</protein>
<accession>B4TN27</accession>
<reference key="1">
    <citation type="journal article" date="2011" name="J. Bacteriol.">
        <title>Comparative genomics of 28 Salmonella enterica isolates: evidence for CRISPR-mediated adaptive sublineage evolution.</title>
        <authorList>
            <person name="Fricke W.F."/>
            <person name="Mammel M.K."/>
            <person name="McDermott P.F."/>
            <person name="Tartera C."/>
            <person name="White D.G."/>
            <person name="Leclerc J.E."/>
            <person name="Ravel J."/>
            <person name="Cebula T.A."/>
        </authorList>
    </citation>
    <scope>NUCLEOTIDE SEQUENCE [LARGE SCALE GENOMIC DNA]</scope>
    <source>
        <strain>CVM19633</strain>
    </source>
</reference>
<proteinExistence type="inferred from homology"/>
<organism>
    <name type="scientific">Salmonella schwarzengrund (strain CVM19633)</name>
    <dbReference type="NCBI Taxonomy" id="439843"/>
    <lineage>
        <taxon>Bacteria</taxon>
        <taxon>Pseudomonadati</taxon>
        <taxon>Pseudomonadota</taxon>
        <taxon>Gammaproteobacteria</taxon>
        <taxon>Enterobacterales</taxon>
        <taxon>Enterobacteriaceae</taxon>
        <taxon>Salmonella</taxon>
    </lineage>
</organism>
<gene>
    <name evidence="1" type="primary">glmU</name>
    <name type="ordered locus">SeSA_A4071</name>
</gene>